<reference key="1">
    <citation type="journal article" date="2006" name="Mol. Phylogenet. Evol.">
        <title>Molecular systematics of Vampyressine bats (Phyllostomidae: Stenodermatinae) with comparison of direct and indirect surveys of mitochondrial DNA variation.</title>
        <authorList>
            <person name="Hoofer S.R."/>
            <person name="Baker R.J."/>
        </authorList>
    </citation>
    <scope>NUCLEOTIDE SEQUENCE [GENOMIC DNA]</scope>
</reference>
<protein>
    <recommendedName>
        <fullName>NADH-ubiquinone oxidoreductase chain 4L</fullName>
        <ecNumber>7.1.1.2</ecNumber>
    </recommendedName>
    <alternativeName>
        <fullName>NADH dehydrogenase subunit 4L</fullName>
    </alternativeName>
</protein>
<proteinExistence type="inferred from homology"/>
<geneLocation type="mitochondrion"/>
<sequence>MSLTYMNMFMAFTISLLGLLMYRSHMMSSLLCLEGMMLSLFVMMTMTILNTHLTLASMIPIILLVFAACEAALGLSLLVMVSTTYGMDYVQNLNLLQC</sequence>
<evidence type="ECO:0000250" key="1">
    <source>
        <dbReference type="UniProtKB" id="P03901"/>
    </source>
</evidence>
<evidence type="ECO:0000250" key="2">
    <source>
        <dbReference type="UniProtKB" id="P03902"/>
    </source>
</evidence>
<evidence type="ECO:0000255" key="3"/>
<evidence type="ECO:0000305" key="4"/>
<feature type="chain" id="PRO_0000275141" description="NADH-ubiquinone oxidoreductase chain 4L">
    <location>
        <begin position="1"/>
        <end position="98"/>
    </location>
</feature>
<feature type="transmembrane region" description="Helical" evidence="3">
    <location>
        <begin position="1"/>
        <end position="21"/>
    </location>
</feature>
<feature type="transmembrane region" description="Helical" evidence="3">
    <location>
        <begin position="29"/>
        <end position="49"/>
    </location>
</feature>
<feature type="transmembrane region" description="Helical" evidence="3">
    <location>
        <begin position="61"/>
        <end position="81"/>
    </location>
</feature>
<comment type="function">
    <text evidence="1">Core subunit of the mitochondrial membrane respiratory chain NADH dehydrogenase (Complex I) which catalyzes electron transfer from NADH through the respiratory chain, using ubiquinone as an electron acceptor. Part of the enzyme membrane arm which is embedded in the lipid bilayer and involved in proton translocation.</text>
</comment>
<comment type="catalytic activity">
    <reaction evidence="1">
        <text>a ubiquinone + NADH + 5 H(+)(in) = a ubiquinol + NAD(+) + 4 H(+)(out)</text>
        <dbReference type="Rhea" id="RHEA:29091"/>
        <dbReference type="Rhea" id="RHEA-COMP:9565"/>
        <dbReference type="Rhea" id="RHEA-COMP:9566"/>
        <dbReference type="ChEBI" id="CHEBI:15378"/>
        <dbReference type="ChEBI" id="CHEBI:16389"/>
        <dbReference type="ChEBI" id="CHEBI:17976"/>
        <dbReference type="ChEBI" id="CHEBI:57540"/>
        <dbReference type="ChEBI" id="CHEBI:57945"/>
        <dbReference type="EC" id="7.1.1.2"/>
    </reaction>
    <physiologicalReaction direction="left-to-right" evidence="1">
        <dbReference type="Rhea" id="RHEA:29092"/>
    </physiologicalReaction>
</comment>
<comment type="subunit">
    <text evidence="2">Core subunit of respiratory chain NADH dehydrogenase (Complex I) which is composed of 45 different subunits.</text>
</comment>
<comment type="subcellular location">
    <subcellularLocation>
        <location evidence="2">Mitochondrion inner membrane</location>
        <topology evidence="3">Multi-pass membrane protein</topology>
    </subcellularLocation>
</comment>
<comment type="similarity">
    <text evidence="4">Belongs to the complex I subunit 4L family.</text>
</comment>
<organism>
    <name type="scientific">Vampyressa bidens</name>
    <name type="common">Bidentate yellow-eared bat</name>
    <name type="synonym">Vampyriscus bidens</name>
    <dbReference type="NCBI Taxonomy" id="148039"/>
    <lineage>
        <taxon>Eukaryota</taxon>
        <taxon>Metazoa</taxon>
        <taxon>Chordata</taxon>
        <taxon>Craniata</taxon>
        <taxon>Vertebrata</taxon>
        <taxon>Euteleostomi</taxon>
        <taxon>Mammalia</taxon>
        <taxon>Eutheria</taxon>
        <taxon>Laurasiatheria</taxon>
        <taxon>Chiroptera</taxon>
        <taxon>Yangochiroptera</taxon>
        <taxon>Phyllostomidae</taxon>
        <taxon>Stenodermatinae</taxon>
        <taxon>Vampyressa</taxon>
    </lineage>
</organism>
<dbReference type="EC" id="7.1.1.2"/>
<dbReference type="EMBL" id="DQ312372">
    <property type="protein sequence ID" value="ABC47532.1"/>
    <property type="molecule type" value="Genomic_DNA"/>
</dbReference>
<dbReference type="EMBL" id="DQ312371">
    <property type="protein sequence ID" value="ABC47529.1"/>
    <property type="molecule type" value="Genomic_DNA"/>
</dbReference>
<dbReference type="SMR" id="Q1HV29"/>
<dbReference type="GO" id="GO:0005743">
    <property type="term" value="C:mitochondrial inner membrane"/>
    <property type="evidence" value="ECO:0000250"/>
    <property type="project" value="UniProtKB"/>
</dbReference>
<dbReference type="GO" id="GO:0045271">
    <property type="term" value="C:respiratory chain complex I"/>
    <property type="evidence" value="ECO:0000250"/>
    <property type="project" value="UniProtKB"/>
</dbReference>
<dbReference type="GO" id="GO:0008137">
    <property type="term" value="F:NADH dehydrogenase (ubiquinone) activity"/>
    <property type="evidence" value="ECO:0000250"/>
    <property type="project" value="UniProtKB"/>
</dbReference>
<dbReference type="GO" id="GO:0042773">
    <property type="term" value="P:ATP synthesis coupled electron transport"/>
    <property type="evidence" value="ECO:0007669"/>
    <property type="project" value="InterPro"/>
</dbReference>
<dbReference type="FunFam" id="1.10.287.3510:FF:000002">
    <property type="entry name" value="NADH-ubiquinone oxidoreductase chain 4L"/>
    <property type="match status" value="1"/>
</dbReference>
<dbReference type="Gene3D" id="1.10.287.3510">
    <property type="match status" value="1"/>
</dbReference>
<dbReference type="InterPro" id="IPR001133">
    <property type="entry name" value="NADH_UbQ_OxRdtase_chain4L/K"/>
</dbReference>
<dbReference type="InterPro" id="IPR039428">
    <property type="entry name" value="NUOK/Mnh_C1-like"/>
</dbReference>
<dbReference type="PANTHER" id="PTHR11434:SF0">
    <property type="entry name" value="NADH-UBIQUINONE OXIDOREDUCTASE CHAIN 4L"/>
    <property type="match status" value="1"/>
</dbReference>
<dbReference type="PANTHER" id="PTHR11434">
    <property type="entry name" value="NADH-UBIQUINONE OXIDOREDUCTASE SUBUNIT ND4L"/>
    <property type="match status" value="1"/>
</dbReference>
<dbReference type="Pfam" id="PF00420">
    <property type="entry name" value="Oxidored_q2"/>
    <property type="match status" value="1"/>
</dbReference>
<gene>
    <name type="primary">MT-ND4L</name>
    <name type="synonym">MTND4L</name>
    <name type="synonym">NADH4L</name>
    <name type="synonym">ND4L</name>
</gene>
<name>NU4LM_VAMBI</name>
<accession>Q1HV29</accession>
<keyword id="KW-0249">Electron transport</keyword>
<keyword id="KW-0472">Membrane</keyword>
<keyword id="KW-0496">Mitochondrion</keyword>
<keyword id="KW-0999">Mitochondrion inner membrane</keyword>
<keyword id="KW-0520">NAD</keyword>
<keyword id="KW-0679">Respiratory chain</keyword>
<keyword id="KW-1278">Translocase</keyword>
<keyword id="KW-0812">Transmembrane</keyword>
<keyword id="KW-1133">Transmembrane helix</keyword>
<keyword id="KW-0813">Transport</keyword>
<keyword id="KW-0830">Ubiquinone</keyword>